<gene>
    <name evidence="1" type="primary">ccmE</name>
    <name evidence="1" type="synonym">cycJ</name>
    <name type="ordered locus">TM1040_1124</name>
</gene>
<comment type="function">
    <text evidence="1">Heme chaperone required for the biogenesis of c-type cytochromes. Transiently binds heme delivered by CcmC and transfers the heme to apo-cytochromes in a process facilitated by CcmF and CcmH.</text>
</comment>
<comment type="subcellular location">
    <subcellularLocation>
        <location evidence="1">Cell inner membrane</location>
        <topology evidence="1">Single-pass type II membrane protein</topology>
        <orientation evidence="1">Periplasmic side</orientation>
    </subcellularLocation>
</comment>
<comment type="similarity">
    <text evidence="1">Belongs to the CcmE/CycJ family.</text>
</comment>
<keyword id="KW-0997">Cell inner membrane</keyword>
<keyword id="KW-1003">Cell membrane</keyword>
<keyword id="KW-0201">Cytochrome c-type biogenesis</keyword>
<keyword id="KW-0349">Heme</keyword>
<keyword id="KW-0408">Iron</keyword>
<keyword id="KW-0472">Membrane</keyword>
<keyword id="KW-0479">Metal-binding</keyword>
<keyword id="KW-1185">Reference proteome</keyword>
<keyword id="KW-0735">Signal-anchor</keyword>
<keyword id="KW-0812">Transmembrane</keyword>
<keyword id="KW-1133">Transmembrane helix</keyword>
<proteinExistence type="inferred from homology"/>
<organism>
    <name type="scientific">Ruegeria sp. (strain TM1040)</name>
    <name type="common">Silicibacter sp.</name>
    <dbReference type="NCBI Taxonomy" id="292414"/>
    <lineage>
        <taxon>Bacteria</taxon>
        <taxon>Pseudomonadati</taxon>
        <taxon>Pseudomonadota</taxon>
        <taxon>Alphaproteobacteria</taxon>
        <taxon>Rhodobacterales</taxon>
        <taxon>Roseobacteraceae</taxon>
        <taxon>Ruegeria</taxon>
    </lineage>
</organism>
<reference key="1">
    <citation type="submission" date="2006-05" db="EMBL/GenBank/DDBJ databases">
        <title>Complete sequence of chromosome of Silicibacter sp. TM1040.</title>
        <authorList>
            <consortium name="US DOE Joint Genome Institute"/>
            <person name="Copeland A."/>
            <person name="Lucas S."/>
            <person name="Lapidus A."/>
            <person name="Barry K."/>
            <person name="Detter J.C."/>
            <person name="Glavina del Rio T."/>
            <person name="Hammon N."/>
            <person name="Israni S."/>
            <person name="Dalin E."/>
            <person name="Tice H."/>
            <person name="Pitluck S."/>
            <person name="Brettin T."/>
            <person name="Bruce D."/>
            <person name="Han C."/>
            <person name="Tapia R."/>
            <person name="Goodwin L."/>
            <person name="Thompson L.S."/>
            <person name="Gilna P."/>
            <person name="Schmutz J."/>
            <person name="Larimer F."/>
            <person name="Land M."/>
            <person name="Hauser L."/>
            <person name="Kyrpides N."/>
            <person name="Kim E."/>
            <person name="Belas R."/>
            <person name="Moran M.A."/>
            <person name="Buchan A."/>
            <person name="Gonzalez J.M."/>
            <person name="Schell M.A."/>
            <person name="Sun F."/>
            <person name="Richardson P."/>
        </authorList>
    </citation>
    <scope>NUCLEOTIDE SEQUENCE [LARGE SCALE GENOMIC DNA]</scope>
    <source>
        <strain>TM1040</strain>
    </source>
</reference>
<protein>
    <recommendedName>
        <fullName evidence="1">Cytochrome c-type biogenesis protein CcmE</fullName>
    </recommendedName>
    <alternativeName>
        <fullName evidence="1">Cytochrome c maturation protein E</fullName>
    </alternativeName>
    <alternativeName>
        <fullName evidence="1">Heme chaperone CcmE</fullName>
    </alternativeName>
</protein>
<feature type="chain" id="PRO_1000070863" description="Cytochrome c-type biogenesis protein CcmE">
    <location>
        <begin position="1"/>
        <end position="147"/>
    </location>
</feature>
<feature type="topological domain" description="Cytoplasmic" evidence="1">
    <location>
        <begin position="1"/>
        <end position="9"/>
    </location>
</feature>
<feature type="transmembrane region" description="Helical; Signal-anchor for type II membrane protein" evidence="1">
    <location>
        <begin position="10"/>
        <end position="30"/>
    </location>
</feature>
<feature type="topological domain" description="Periplasmic" evidence="1">
    <location>
        <begin position="31"/>
        <end position="147"/>
    </location>
</feature>
<feature type="binding site" description="covalent" evidence="1">
    <location>
        <position position="123"/>
    </location>
    <ligand>
        <name>heme</name>
        <dbReference type="ChEBI" id="CHEBI:30413"/>
    </ligand>
</feature>
<feature type="binding site" description="axial binding residue" evidence="1">
    <location>
        <position position="127"/>
    </location>
    <ligand>
        <name>heme</name>
        <dbReference type="ChEBI" id="CHEBI:30413"/>
    </ligand>
    <ligandPart>
        <name>Fe</name>
        <dbReference type="ChEBI" id="CHEBI:18248"/>
    </ligandPart>
</feature>
<name>CCME_RUEST</name>
<evidence type="ECO:0000255" key="1">
    <source>
        <dbReference type="HAMAP-Rule" id="MF_01959"/>
    </source>
</evidence>
<accession>Q1GHK9</accession>
<sequence length="147" mass="16016">MKSLKKQRRIQIIALATVALVGSTALIGYAMRDGINYFRSPSQVMETPPEPTETFRIGGLVEEGTLQRGQGEAVRFSVTDGGASVPVTYVGVLPDLFEENQGMVGTGRYVNGVFEASEILAKHDETYMPKEVVDALKEQGVYREGDS</sequence>
<dbReference type="EMBL" id="CP000377">
    <property type="protein sequence ID" value="ABF63857.1"/>
    <property type="molecule type" value="Genomic_DNA"/>
</dbReference>
<dbReference type="RefSeq" id="WP_011538464.1">
    <property type="nucleotide sequence ID" value="NC_008044.1"/>
</dbReference>
<dbReference type="SMR" id="Q1GHK9"/>
<dbReference type="STRING" id="292414.TM1040_1124"/>
<dbReference type="KEGG" id="sit:TM1040_1124"/>
<dbReference type="eggNOG" id="COG2332">
    <property type="taxonomic scope" value="Bacteria"/>
</dbReference>
<dbReference type="HOGENOM" id="CLU_079503_1_1_5"/>
<dbReference type="OrthoDB" id="9793584at2"/>
<dbReference type="Proteomes" id="UP000000636">
    <property type="component" value="Chromosome"/>
</dbReference>
<dbReference type="GO" id="GO:0005886">
    <property type="term" value="C:plasma membrane"/>
    <property type="evidence" value="ECO:0007669"/>
    <property type="project" value="UniProtKB-SubCell"/>
</dbReference>
<dbReference type="GO" id="GO:0020037">
    <property type="term" value="F:heme binding"/>
    <property type="evidence" value="ECO:0007669"/>
    <property type="project" value="InterPro"/>
</dbReference>
<dbReference type="GO" id="GO:0046872">
    <property type="term" value="F:metal ion binding"/>
    <property type="evidence" value="ECO:0007669"/>
    <property type="project" value="UniProtKB-KW"/>
</dbReference>
<dbReference type="GO" id="GO:0017004">
    <property type="term" value="P:cytochrome complex assembly"/>
    <property type="evidence" value="ECO:0007669"/>
    <property type="project" value="UniProtKB-KW"/>
</dbReference>
<dbReference type="Gene3D" id="2.40.50.140">
    <property type="entry name" value="Nucleic acid-binding proteins"/>
    <property type="match status" value="1"/>
</dbReference>
<dbReference type="HAMAP" id="MF_01959">
    <property type="entry name" value="CcmE"/>
    <property type="match status" value="1"/>
</dbReference>
<dbReference type="InterPro" id="IPR004329">
    <property type="entry name" value="CcmE"/>
</dbReference>
<dbReference type="InterPro" id="IPR036127">
    <property type="entry name" value="CcmE-like_sf"/>
</dbReference>
<dbReference type="InterPro" id="IPR012340">
    <property type="entry name" value="NA-bd_OB-fold"/>
</dbReference>
<dbReference type="NCBIfam" id="NF009727">
    <property type="entry name" value="PRK13254.1-1"/>
    <property type="match status" value="1"/>
</dbReference>
<dbReference type="NCBIfam" id="NF009731">
    <property type="entry name" value="PRK13254.1-5"/>
    <property type="match status" value="1"/>
</dbReference>
<dbReference type="PANTHER" id="PTHR34128">
    <property type="entry name" value="CYTOCHROME C-TYPE BIOGENESIS PROTEIN CCME HOMOLOG, MITOCHONDRIAL"/>
    <property type="match status" value="1"/>
</dbReference>
<dbReference type="PANTHER" id="PTHR34128:SF2">
    <property type="entry name" value="CYTOCHROME C-TYPE BIOGENESIS PROTEIN CCME HOMOLOG, MITOCHONDRIAL"/>
    <property type="match status" value="1"/>
</dbReference>
<dbReference type="Pfam" id="PF03100">
    <property type="entry name" value="CcmE"/>
    <property type="match status" value="1"/>
</dbReference>
<dbReference type="SUPFAM" id="SSF82093">
    <property type="entry name" value="Heme chaperone CcmE"/>
    <property type="match status" value="1"/>
</dbReference>